<dbReference type="EC" id="3.4.21.46"/>
<dbReference type="EMBL" id="U29948">
    <property type="protein sequence ID" value="AAA73627.1"/>
    <property type="molecule type" value="mRNA"/>
</dbReference>
<dbReference type="EMBL" id="Z49058">
    <property type="protein sequence ID" value="CAA88844.1"/>
    <property type="molecule type" value="mRNA"/>
</dbReference>
<dbReference type="PIR" id="S54115">
    <property type="entry name" value="S54115"/>
</dbReference>
<dbReference type="RefSeq" id="NP_001233173.1">
    <property type="nucleotide sequence ID" value="NM_001246244.1"/>
</dbReference>
<dbReference type="RefSeq" id="XP_013850255.1">
    <property type="nucleotide sequence ID" value="XM_013994801.1"/>
</dbReference>
<dbReference type="SMR" id="P51779"/>
<dbReference type="FunCoup" id="P51779">
    <property type="interactions" value="109"/>
</dbReference>
<dbReference type="STRING" id="9823.ENSSSCP00000014267"/>
<dbReference type="MEROPS" id="S01.191"/>
<dbReference type="PaxDb" id="9823-ENSSSCP00000014267"/>
<dbReference type="PeptideAtlas" id="P51779"/>
<dbReference type="Ensembl" id="ENSSSCT00000014662.5">
    <property type="protein sequence ID" value="ENSSSCP00000014267.2"/>
    <property type="gene ID" value="ENSSSCG00000013418.5"/>
</dbReference>
<dbReference type="Ensembl" id="ENSSSCT00015110733.1">
    <property type="protein sequence ID" value="ENSSSCP00015047364.1"/>
    <property type="gene ID" value="ENSSSCG00015081206.1"/>
</dbReference>
<dbReference type="Ensembl" id="ENSSSCT00025010178.1">
    <property type="protein sequence ID" value="ENSSSCP00025004071.1"/>
    <property type="gene ID" value="ENSSSCG00025007659.1"/>
</dbReference>
<dbReference type="Ensembl" id="ENSSSCT00030023893.1">
    <property type="protein sequence ID" value="ENSSSCP00030010712.1"/>
    <property type="gene ID" value="ENSSSCG00030017276.1"/>
</dbReference>
<dbReference type="Ensembl" id="ENSSSCT00035100272.1">
    <property type="protein sequence ID" value="ENSSSCP00035042561.1"/>
    <property type="gene ID" value="ENSSSCG00035073930.1"/>
</dbReference>
<dbReference type="Ensembl" id="ENSSSCT00040088052.1">
    <property type="protein sequence ID" value="ENSSSCP00040038691.1"/>
    <property type="gene ID" value="ENSSSCG00040064392.1"/>
</dbReference>
<dbReference type="Ensembl" id="ENSSSCT00045054307.1">
    <property type="protein sequence ID" value="ENSSSCP00045037812.1"/>
    <property type="gene ID" value="ENSSSCG00045031770.1"/>
</dbReference>
<dbReference type="Ensembl" id="ENSSSCT00050091537.1">
    <property type="protein sequence ID" value="ENSSSCP00050039408.1"/>
    <property type="gene ID" value="ENSSSCG00050067127.1"/>
</dbReference>
<dbReference type="Ensembl" id="ENSSSCT00055048922.1">
    <property type="protein sequence ID" value="ENSSSCP00055039056.1"/>
    <property type="gene ID" value="ENSSSCG00055024762.1"/>
</dbReference>
<dbReference type="Ensembl" id="ENSSSCT00060013955.1">
    <property type="protein sequence ID" value="ENSSSCP00060005354.1"/>
    <property type="gene ID" value="ENSSSCG00060010731.1"/>
</dbReference>
<dbReference type="Ensembl" id="ENSSSCT00065009398.1">
    <property type="protein sequence ID" value="ENSSSCP00065003919.1"/>
    <property type="gene ID" value="ENSSSCG00065007012.1"/>
</dbReference>
<dbReference type="Ensembl" id="ENSSSCT00070053755.1">
    <property type="protein sequence ID" value="ENSSSCP00070045575.1"/>
    <property type="gene ID" value="ENSSSCG00070026800.1"/>
</dbReference>
<dbReference type="Ensembl" id="ENSSSCT00105061779">
    <property type="protein sequence ID" value="ENSSSCP00105043862"/>
    <property type="gene ID" value="ENSSSCG00105032459"/>
</dbReference>
<dbReference type="Ensembl" id="ENSSSCT00110022639">
    <property type="protein sequence ID" value="ENSSSCP00110015384"/>
    <property type="gene ID" value="ENSSSCG00110011759"/>
</dbReference>
<dbReference type="Ensembl" id="ENSSSCT00115018896">
    <property type="protein sequence ID" value="ENSSSCP00115017866"/>
    <property type="gene ID" value="ENSSSCG00115010940"/>
</dbReference>
<dbReference type="Ensembl" id="ENSSSCT00130073873">
    <property type="protein sequence ID" value="ENSSSCP00130053278"/>
    <property type="gene ID" value="ENSSSCG00130037795"/>
</dbReference>
<dbReference type="GeneID" id="396877"/>
<dbReference type="KEGG" id="ssc:396877"/>
<dbReference type="CTD" id="1675"/>
<dbReference type="VGNC" id="VGNC:86609">
    <property type="gene designation" value="CFD"/>
</dbReference>
<dbReference type="eggNOG" id="KOG3627">
    <property type="taxonomic scope" value="Eukaryota"/>
</dbReference>
<dbReference type="GeneTree" id="ENSGT00940000162255"/>
<dbReference type="HOGENOM" id="CLU_006842_1_0_1"/>
<dbReference type="InParanoid" id="P51779"/>
<dbReference type="OMA" id="YTRTAPY"/>
<dbReference type="OrthoDB" id="60866at2759"/>
<dbReference type="TreeFam" id="TF333630"/>
<dbReference type="Reactome" id="R-SSC-114608">
    <property type="pathway name" value="Platelet degranulation"/>
</dbReference>
<dbReference type="Reactome" id="R-SSC-173736">
    <property type="pathway name" value="Alternative complement activation"/>
</dbReference>
<dbReference type="Reactome" id="R-SSC-6798695">
    <property type="pathway name" value="Neutrophil degranulation"/>
</dbReference>
<dbReference type="Proteomes" id="UP000008227">
    <property type="component" value="Chromosome 2"/>
</dbReference>
<dbReference type="Proteomes" id="UP000314985">
    <property type="component" value="Chromosome 2"/>
</dbReference>
<dbReference type="Proteomes" id="UP000694570">
    <property type="component" value="Unplaced"/>
</dbReference>
<dbReference type="Proteomes" id="UP000694571">
    <property type="component" value="Unplaced"/>
</dbReference>
<dbReference type="Proteomes" id="UP000694720">
    <property type="component" value="Unplaced"/>
</dbReference>
<dbReference type="Proteomes" id="UP000694722">
    <property type="component" value="Unplaced"/>
</dbReference>
<dbReference type="Proteomes" id="UP000694723">
    <property type="component" value="Unplaced"/>
</dbReference>
<dbReference type="Proteomes" id="UP000694724">
    <property type="component" value="Unplaced"/>
</dbReference>
<dbReference type="Proteomes" id="UP000694725">
    <property type="component" value="Unplaced"/>
</dbReference>
<dbReference type="Proteomes" id="UP000694726">
    <property type="component" value="Unplaced"/>
</dbReference>
<dbReference type="Proteomes" id="UP000694727">
    <property type="component" value="Unplaced"/>
</dbReference>
<dbReference type="Proteomes" id="UP000694728">
    <property type="component" value="Unplaced"/>
</dbReference>
<dbReference type="Bgee" id="ENSSSCG00000013418">
    <property type="expression patterns" value="Expressed in blood and 40 other cell types or tissues"/>
</dbReference>
<dbReference type="ExpressionAtlas" id="P51779">
    <property type="expression patterns" value="baseline and differential"/>
</dbReference>
<dbReference type="GO" id="GO:0005615">
    <property type="term" value="C:extracellular space"/>
    <property type="evidence" value="ECO:0000318"/>
    <property type="project" value="GO_Central"/>
</dbReference>
<dbReference type="GO" id="GO:0004252">
    <property type="term" value="F:serine-type endopeptidase activity"/>
    <property type="evidence" value="ECO:0000318"/>
    <property type="project" value="GO_Central"/>
</dbReference>
<dbReference type="GO" id="GO:0006957">
    <property type="term" value="P:complement activation, alternative pathway"/>
    <property type="evidence" value="ECO:0007669"/>
    <property type="project" value="UniProtKB-KW"/>
</dbReference>
<dbReference type="GO" id="GO:0051604">
    <property type="term" value="P:protein maturation"/>
    <property type="evidence" value="ECO:0000318"/>
    <property type="project" value="GO_Central"/>
</dbReference>
<dbReference type="GO" id="GO:0006508">
    <property type="term" value="P:proteolysis"/>
    <property type="evidence" value="ECO:0007669"/>
    <property type="project" value="UniProtKB-KW"/>
</dbReference>
<dbReference type="GO" id="GO:0009617">
    <property type="term" value="P:response to bacterium"/>
    <property type="evidence" value="ECO:0007669"/>
    <property type="project" value="Ensembl"/>
</dbReference>
<dbReference type="CDD" id="cd00190">
    <property type="entry name" value="Tryp_SPc"/>
    <property type="match status" value="1"/>
</dbReference>
<dbReference type="FunFam" id="2.40.10.10:FF:000120">
    <property type="entry name" value="Putative serine protease"/>
    <property type="match status" value="1"/>
</dbReference>
<dbReference type="Gene3D" id="2.40.10.10">
    <property type="entry name" value="Trypsin-like serine proteases"/>
    <property type="match status" value="2"/>
</dbReference>
<dbReference type="InterPro" id="IPR009003">
    <property type="entry name" value="Peptidase_S1_PA"/>
</dbReference>
<dbReference type="InterPro" id="IPR043504">
    <property type="entry name" value="Peptidase_S1_PA_chymotrypsin"/>
</dbReference>
<dbReference type="InterPro" id="IPR001314">
    <property type="entry name" value="Peptidase_S1A"/>
</dbReference>
<dbReference type="InterPro" id="IPR001254">
    <property type="entry name" value="Trypsin_dom"/>
</dbReference>
<dbReference type="InterPro" id="IPR018114">
    <property type="entry name" value="TRYPSIN_HIS"/>
</dbReference>
<dbReference type="InterPro" id="IPR033116">
    <property type="entry name" value="TRYPSIN_SER"/>
</dbReference>
<dbReference type="PANTHER" id="PTHR24271:SF54">
    <property type="entry name" value="COMPLEMENT FACTOR D"/>
    <property type="match status" value="1"/>
</dbReference>
<dbReference type="PANTHER" id="PTHR24271">
    <property type="entry name" value="KALLIKREIN-RELATED"/>
    <property type="match status" value="1"/>
</dbReference>
<dbReference type="Pfam" id="PF00089">
    <property type="entry name" value="Trypsin"/>
    <property type="match status" value="1"/>
</dbReference>
<dbReference type="PRINTS" id="PR00722">
    <property type="entry name" value="CHYMOTRYPSIN"/>
</dbReference>
<dbReference type="SMART" id="SM00020">
    <property type="entry name" value="Tryp_SPc"/>
    <property type="match status" value="1"/>
</dbReference>
<dbReference type="SUPFAM" id="SSF50494">
    <property type="entry name" value="Trypsin-like serine proteases"/>
    <property type="match status" value="1"/>
</dbReference>
<dbReference type="PROSITE" id="PS50240">
    <property type="entry name" value="TRYPSIN_DOM"/>
    <property type="match status" value="1"/>
</dbReference>
<dbReference type="PROSITE" id="PS00134">
    <property type="entry name" value="TRYPSIN_HIS"/>
    <property type="match status" value="1"/>
</dbReference>
<dbReference type="PROSITE" id="PS00135">
    <property type="entry name" value="TRYPSIN_SER"/>
    <property type="match status" value="1"/>
</dbReference>
<proteinExistence type="evidence at transcript level"/>
<comment type="function">
    <text evidence="1">Serine protease that initiates the alternative pathway of the complement system, a cascade of proteins that leads to phagocytosis and breakdown of pathogens and signaling that strengthens the adaptive immune system. In contrast to other complement pathways (classical, lectin and GZMK) that are directly activated by pathogens or antigen-antibody complexes, the alternative complement pathway is initiated by the spontaneous hydrolysis of complement C3. The alternative complement pathway acts as an amplification loop that enhances complement activation by mediating the formation of C3 and C5 convertases. Activated CFD cleaves factor B (CFB) when the latter is complexed with complement C3b, activating the C3 convertase of the alternative pathway.</text>
</comment>
<comment type="catalytic activity">
    <reaction evidence="1">
        <text>Selective cleavage of Arg-|-Lys bond in complement factor B when in complex with complement subcomponent C3b or with cobra venom factor.</text>
        <dbReference type="EC" id="3.4.21.46"/>
    </reaction>
</comment>
<comment type="activity regulation">
    <text evidence="1">Circulates in plasma in a mature but self-inhibited form. Activated by factor B (CFB), which displaces the self-inhibition loop. Associates with CFB complexed with complement C3b.</text>
</comment>
<comment type="subcellular location">
    <subcellularLocation>
        <location evidence="1">Secreted</location>
    </subcellularLocation>
</comment>
<comment type="domain">
    <text evidence="1">The self-inhibition loop inihibits the serine protease activity in absence of factor B (CFB) substrate.</text>
</comment>
<comment type="PTM">
    <text evidence="1">CFD is activated by the removal of 5 residues at the N-terminus, named activation peptide, by the MASP-3 isoform of MASP1.</text>
</comment>
<comment type="similarity">
    <text evidence="3">Belongs to the peptidase S1 family.</text>
</comment>
<protein>
    <recommendedName>
        <fullName>Complement factor D</fullName>
        <ecNumber>3.4.21.46</ecNumber>
    </recommendedName>
    <alternativeName>
        <fullName>Adipsin</fullName>
    </alternativeName>
    <alternativeName>
        <fullName>C3 convertase activator</fullName>
    </alternativeName>
    <alternativeName>
        <fullName>Properdin factor D</fullName>
    </alternativeName>
</protein>
<accession>P51779</accession>
<name>CFAD_PIG</name>
<reference key="1">
    <citation type="submission" date="1999-11" db="EMBL/GenBank/DDBJ databases">
        <authorList>
            <consortium name="Porcine genome sequencing project"/>
        </authorList>
    </citation>
    <scope>NUCLEOTIDE SEQUENCE [LARGE SCALE GENOMIC DNA]</scope>
</reference>
<reference key="2">
    <citation type="submission" date="1995-08" db="EMBL/GenBank/DDBJ databases">
        <authorList>
            <person name="Miner J.L."/>
            <person name="Hahn K.J."/>
            <person name="Staten N.R."/>
            <person name="Baile C.A."/>
        </authorList>
    </citation>
    <scope>NUCLEOTIDE SEQUENCE [MRNA]</scope>
    <source>
        <tissue>Adipose tissue</tissue>
    </source>
</reference>
<reference key="3">
    <citation type="submission" date="1995-04" db="EMBL/GenBank/DDBJ databases">
        <authorList>
            <person name="Nicolas N."/>
        </authorList>
    </citation>
    <scope>NUCLEOTIDE SEQUENCE [MRNA] OF 69-259</scope>
    <source>
        <tissue>Adipose tissue</tissue>
    </source>
</reference>
<sequence>MADRSGHLAALILLGAAVCVAQPRGRILGGQEAKSHERPYMASVQVNGKHVCGGFLVSEQWVLSAAHCLEDVAEGKLQVLLGAHSLSQPEPSKRLYDVLRAVPHPDSQPDTIDHDLLLLKLSEKAELGPAVQPLAWQREDHEVPAGTLCDVAGWGVVSHTGRRPDRLQHLLLPVLDRTTCNLRTYHDGTITERMMCAESNRRDSCKGDSGGPLVCGGVAEGVVTSGSRVCGNRKKPGIYTRLASYVAWIDGVMADSAAA</sequence>
<organism>
    <name type="scientific">Sus scrofa</name>
    <name type="common">Pig</name>
    <dbReference type="NCBI Taxonomy" id="9823"/>
    <lineage>
        <taxon>Eukaryota</taxon>
        <taxon>Metazoa</taxon>
        <taxon>Chordata</taxon>
        <taxon>Craniata</taxon>
        <taxon>Vertebrata</taxon>
        <taxon>Euteleostomi</taxon>
        <taxon>Mammalia</taxon>
        <taxon>Eutheria</taxon>
        <taxon>Laurasiatheria</taxon>
        <taxon>Artiodactyla</taxon>
        <taxon>Suina</taxon>
        <taxon>Suidae</taxon>
        <taxon>Sus</taxon>
    </lineage>
</organism>
<feature type="signal peptide" evidence="2">
    <location>
        <begin position="1"/>
        <end position="21"/>
    </location>
</feature>
<feature type="propeptide" id="PRO_0000027564" description="Activation peptide" evidence="1">
    <location>
        <begin position="22"/>
        <end position="26"/>
    </location>
</feature>
<feature type="chain" id="PRO_0000027565" description="Complement factor D">
    <location>
        <begin position="27"/>
        <end position="259"/>
    </location>
</feature>
<feature type="domain" description="Peptidase S1" evidence="3">
    <location>
        <begin position="27"/>
        <end position="254"/>
    </location>
</feature>
<feature type="region of interest" description="Self-inhibitor loop" evidence="1">
    <location>
        <begin position="224"/>
        <end position="228"/>
    </location>
</feature>
<feature type="active site" description="Charge relay system" evidence="1">
    <location>
        <position position="67"/>
    </location>
</feature>
<feature type="active site" description="Charge relay system" evidence="1">
    <location>
        <position position="115"/>
    </location>
</feature>
<feature type="active site" description="Charge relay system" evidence="1">
    <location>
        <position position="209"/>
    </location>
</feature>
<feature type="site" description="Cleavage; by MASP-3 isoform of MASP1" evidence="1">
    <location>
        <begin position="26"/>
        <end position="27"/>
    </location>
</feature>
<feature type="disulfide bond" evidence="3">
    <location>
        <begin position="52"/>
        <end position="68"/>
    </location>
</feature>
<feature type="disulfide bond" evidence="3">
    <location>
        <begin position="149"/>
        <end position="215"/>
    </location>
</feature>
<feature type="disulfide bond" evidence="3">
    <location>
        <begin position="180"/>
        <end position="196"/>
    </location>
</feature>
<feature type="disulfide bond" evidence="3">
    <location>
        <begin position="205"/>
        <end position="230"/>
    </location>
</feature>
<gene>
    <name type="primary">CFD</name>
    <name type="synonym">DF</name>
</gene>
<evidence type="ECO:0000250" key="1">
    <source>
        <dbReference type="UniProtKB" id="P00746"/>
    </source>
</evidence>
<evidence type="ECO:0000255" key="2"/>
<evidence type="ECO:0000255" key="3">
    <source>
        <dbReference type="PROSITE-ProRule" id="PRU00274"/>
    </source>
</evidence>
<keyword id="KW-0179">Complement alternate pathway</keyword>
<keyword id="KW-1015">Disulfide bond</keyword>
<keyword id="KW-0378">Hydrolase</keyword>
<keyword id="KW-0391">Immunity</keyword>
<keyword id="KW-0399">Innate immunity</keyword>
<keyword id="KW-0645">Protease</keyword>
<keyword id="KW-1185">Reference proteome</keyword>
<keyword id="KW-0964">Secreted</keyword>
<keyword id="KW-0720">Serine protease</keyword>
<keyword id="KW-0732">Signal</keyword>
<keyword id="KW-0865">Zymogen</keyword>